<accession>P22944</accession>
<accession>C8VU59</accession>
<accession>Q5BEM3</accession>
<evidence type="ECO:0000250" key="1"/>
<evidence type="ECO:0000250" key="2">
    <source>
        <dbReference type="UniProtKB" id="P05340"/>
    </source>
</evidence>
<evidence type="ECO:0000255" key="3"/>
<evidence type="ECO:0000255" key="4">
    <source>
        <dbReference type="PROSITE-ProRule" id="PRU00628"/>
    </source>
</evidence>
<evidence type="ECO:0000256" key="5">
    <source>
        <dbReference type="SAM" id="MobiDB-lite"/>
    </source>
</evidence>
<evidence type="ECO:0000305" key="6"/>
<comment type="catalytic activity">
    <reaction>
        <text>NH4(+) + 3 NADP(+) + 2 H2O = nitrite + 3 NADPH + 5 H(+)</text>
        <dbReference type="Rhea" id="RHEA:24632"/>
        <dbReference type="ChEBI" id="CHEBI:15377"/>
        <dbReference type="ChEBI" id="CHEBI:15378"/>
        <dbReference type="ChEBI" id="CHEBI:16301"/>
        <dbReference type="ChEBI" id="CHEBI:28938"/>
        <dbReference type="ChEBI" id="CHEBI:57783"/>
        <dbReference type="ChEBI" id="CHEBI:58349"/>
        <dbReference type="EC" id="1.7.1.4"/>
    </reaction>
</comment>
<comment type="catalytic activity">
    <reaction>
        <text>NH4(+) + 3 NAD(+) + 2 H2O = nitrite + 3 NADH + 5 H(+)</text>
        <dbReference type="Rhea" id="RHEA:24628"/>
        <dbReference type="ChEBI" id="CHEBI:15377"/>
        <dbReference type="ChEBI" id="CHEBI:15378"/>
        <dbReference type="ChEBI" id="CHEBI:16301"/>
        <dbReference type="ChEBI" id="CHEBI:28938"/>
        <dbReference type="ChEBI" id="CHEBI:57540"/>
        <dbReference type="ChEBI" id="CHEBI:57945"/>
        <dbReference type="EC" id="1.7.1.4"/>
    </reaction>
</comment>
<comment type="cofactor">
    <cofactor>
        <name>siroheme</name>
        <dbReference type="ChEBI" id="CHEBI:60052"/>
    </cofactor>
    <text>Binds 1 siroheme per subunit.</text>
</comment>
<comment type="cofactor">
    <cofactor evidence="1">
        <name>[4Fe-4S] cluster</name>
        <dbReference type="ChEBI" id="CHEBI:49883"/>
    </cofactor>
    <text evidence="1">Binds 1 [4Fe-4S] cluster per subunit.</text>
</comment>
<comment type="cofactor">
    <cofactor>
        <name>FAD</name>
        <dbReference type="ChEBI" id="CHEBI:57692"/>
    </cofactor>
</comment>
<comment type="cofactor">
    <cofactor evidence="2 4">
        <name>[2Fe-2S] cluster</name>
        <dbReference type="ChEBI" id="CHEBI:190135"/>
    </cofactor>
    <text evidence="2 4">Binds 2 [2Fe-2S] clusters per subunit.</text>
</comment>
<comment type="pathway">
    <text>Nitrogen metabolism; nitrate reduction (assimilation).</text>
</comment>
<comment type="subunit">
    <text>Homodimer.</text>
</comment>
<comment type="similarity">
    <text evidence="6">Belongs to the nitrite and sulfite reductase 4Fe-4S domain family.</text>
</comment>
<organism>
    <name type="scientific">Emericella nidulans (strain FGSC A4 / ATCC 38163 / CBS 112.46 / NRRL 194 / M139)</name>
    <name type="common">Aspergillus nidulans</name>
    <dbReference type="NCBI Taxonomy" id="227321"/>
    <lineage>
        <taxon>Eukaryota</taxon>
        <taxon>Fungi</taxon>
        <taxon>Dikarya</taxon>
        <taxon>Ascomycota</taxon>
        <taxon>Pezizomycotina</taxon>
        <taxon>Eurotiomycetes</taxon>
        <taxon>Eurotiomycetidae</taxon>
        <taxon>Eurotiales</taxon>
        <taxon>Aspergillaceae</taxon>
        <taxon>Aspergillus</taxon>
        <taxon>Aspergillus subgen. Nidulantes</taxon>
    </lineage>
</organism>
<keyword id="KW-0001">2Fe-2S</keyword>
<keyword id="KW-0004">4Fe-4S</keyword>
<keyword id="KW-0274">FAD</keyword>
<keyword id="KW-0285">Flavoprotein</keyword>
<keyword id="KW-0349">Heme</keyword>
<keyword id="KW-0408">Iron</keyword>
<keyword id="KW-0411">Iron-sulfur</keyword>
<keyword id="KW-0479">Metal-binding</keyword>
<keyword id="KW-0521">NADP</keyword>
<keyword id="KW-0534">Nitrate assimilation</keyword>
<keyword id="KW-0560">Oxidoreductase</keyword>
<keyword id="KW-1185">Reference proteome</keyword>
<sequence length="1104" mass="122646">MPLLDGPRNGETVTASAHNGIPIIDGVDPSTLRGDIDQDPNRRQKIVVVGLGMVAVAFIEKLVKLDSERRKYDIVVIGEEPHIAYNRVGLSSYFEHRKIEDLYLNPKEWYGSFKDRSFDYYLNTRVTDVFPQHKTVKTSTGDIVSYDILVLATGSDAVLPTSTPGHDAKGIFVYRTISDLERLMEFAANHKGQTGVTVGGGLLGLEAAKAMTDLEDFGSVKLIDRNKWVLARQLDGDAGSLVTKKIRDLGLEVLHEKRVAKIHTDDDNNVTGILFEDGQELDCCCICFAIGIRPRDELGGSTGIQCAKRGGFVIDESLRTSVNDIYAIGECASWENQTFGIIAPGIEMADVLSFNLTNPDKEPKRFNRPDLSTKLKLLGVDVASFGDFFADRDGPKFLPGQRPSAESIGAADPNREEEPQVKALTYRDPFGGVYKKYLFTMDGKYLLGGMMIGDTKDYVKLNQMVKSQKPLEVPPSEFILGAQSGGEENADDLDDSTQICSCHNVTKGDVVESVKSGTCKTIADVKSCTKAGTGCGGCMPLVQSIFNKTMLDMGQEVSNNLCVHIPYSRADLYNVIAIRQLRTFDDVMKSAGKCPDSLGCEICKPAIASILSSLFNPHLMDKEYHELQETNDRFLANIQRNGTFSVVPRVPGGEITADKLIAIGQVAKKYNLYCKITGGQRIDMFGARKQDLLDIWTELVDAGMESGHAYAKSLRTVKSCVGTTWCRFGVGDSVGMAIRLEQRYKSIRAPHKFKGAVSGCVRECAEAQNKDFGLIATEKGFNIFVGGNGGAKPRHSELLAKDVPPEEVIPILDRYVIFYIRTADKLQRTARWLESLPGGIEYLKDVVLNDKLGIAAEMERQMQELVDSYFCEWTETVRNPKRRKYFQQFANTDETVENVEIVKEREQVRPTYWPKDGANEDFKGHQWSSLSWQPVIKADYFSDGPPAISSANIKRGDTQLAIFKVKGKYYATQQMCPHKRTFVLSDGLIGDDDNGKYWVSCPYHKRNFELNGEQAGRCQNDEAMNIATFPVEEREDGWIYMKLPPVEELDSVLGTEKWKVKKGEAVDPFEAYDKKYSGMKGKRAGAKGIEGSKPTRSPSNTIDW</sequence>
<protein>
    <recommendedName>
        <fullName>Nitrite reductase [NAD(P)H]</fullName>
        <ecNumber>1.7.1.4</ecNumber>
    </recommendedName>
</protein>
<dbReference type="EC" id="1.7.1.4"/>
<dbReference type="EMBL" id="M58289">
    <property type="protein sequence ID" value="AAA33315.1"/>
    <property type="molecule type" value="Genomic_DNA"/>
</dbReference>
<dbReference type="EMBL" id="AACD01000015">
    <property type="protein sequence ID" value="EAA65575.1"/>
    <property type="molecule type" value="Genomic_DNA"/>
</dbReference>
<dbReference type="EMBL" id="BN001308">
    <property type="protein sequence ID" value="CBF88349.1"/>
    <property type="molecule type" value="Genomic_DNA"/>
</dbReference>
<dbReference type="PIR" id="JH0181">
    <property type="entry name" value="JH0181"/>
</dbReference>
<dbReference type="RefSeq" id="XP_658611.1">
    <property type="nucleotide sequence ID" value="XM_653519.2"/>
</dbReference>
<dbReference type="SMR" id="P22944"/>
<dbReference type="STRING" id="227321.P22944"/>
<dbReference type="EnsemblFungi" id="CBF88349">
    <property type="protein sequence ID" value="CBF88349"/>
    <property type="gene ID" value="ANIA_01007"/>
</dbReference>
<dbReference type="GeneID" id="2876784"/>
<dbReference type="KEGG" id="ani:ANIA_01007"/>
<dbReference type="VEuPathDB" id="FungiDB:AN1007"/>
<dbReference type="eggNOG" id="KOG1336">
    <property type="taxonomic scope" value="Eukaryota"/>
</dbReference>
<dbReference type="HOGENOM" id="CLU_003291_0_0_1"/>
<dbReference type="InParanoid" id="P22944"/>
<dbReference type="OMA" id="MWGGVTN"/>
<dbReference type="OrthoDB" id="432169at2759"/>
<dbReference type="UniPathway" id="UPA00653"/>
<dbReference type="Proteomes" id="UP000000560">
    <property type="component" value="Chromosome VIII"/>
</dbReference>
<dbReference type="GO" id="GO:0051537">
    <property type="term" value="F:2 iron, 2 sulfur cluster binding"/>
    <property type="evidence" value="ECO:0007669"/>
    <property type="project" value="UniProtKB-KW"/>
</dbReference>
<dbReference type="GO" id="GO:0051539">
    <property type="term" value="F:4 iron, 4 sulfur cluster binding"/>
    <property type="evidence" value="ECO:0007669"/>
    <property type="project" value="UniProtKB-KW"/>
</dbReference>
<dbReference type="GO" id="GO:0020037">
    <property type="term" value="F:heme binding"/>
    <property type="evidence" value="ECO:0007669"/>
    <property type="project" value="InterPro"/>
</dbReference>
<dbReference type="GO" id="GO:0046872">
    <property type="term" value="F:metal ion binding"/>
    <property type="evidence" value="ECO:0007669"/>
    <property type="project" value="UniProtKB-KW"/>
</dbReference>
<dbReference type="GO" id="GO:0008942">
    <property type="term" value="F:nitrite reductase [NAD(P)H] activity"/>
    <property type="evidence" value="ECO:0007669"/>
    <property type="project" value="UniProtKB-EC"/>
</dbReference>
<dbReference type="GO" id="GO:0009061">
    <property type="term" value="P:anaerobic respiration"/>
    <property type="evidence" value="ECO:0000315"/>
    <property type="project" value="UniProtKB"/>
</dbReference>
<dbReference type="GO" id="GO:0042128">
    <property type="term" value="P:nitrate assimilation"/>
    <property type="evidence" value="ECO:0007669"/>
    <property type="project" value="UniProtKB-UniPathway"/>
</dbReference>
<dbReference type="CDD" id="cd19943">
    <property type="entry name" value="NirB_Fer2_BFD-like_1"/>
    <property type="match status" value="1"/>
</dbReference>
<dbReference type="CDD" id="cd03529">
    <property type="entry name" value="Rieske_NirD"/>
    <property type="match status" value="1"/>
</dbReference>
<dbReference type="FunFam" id="3.30.413.10:FF:000007">
    <property type="entry name" value="Nitrite reductase [NAD(P)H] large subunit"/>
    <property type="match status" value="1"/>
</dbReference>
<dbReference type="FunFam" id="1.10.10.1100:FF:000002">
    <property type="entry name" value="Nitrite reductase large subunit"/>
    <property type="match status" value="1"/>
</dbReference>
<dbReference type="FunFam" id="3.50.50.60:FF:000407">
    <property type="entry name" value="Nitrite reductase NiiA"/>
    <property type="match status" value="1"/>
</dbReference>
<dbReference type="Gene3D" id="1.10.10.1100">
    <property type="entry name" value="BFD-like [2Fe-2S]-binding domain"/>
    <property type="match status" value="1"/>
</dbReference>
<dbReference type="Gene3D" id="3.50.50.60">
    <property type="entry name" value="FAD/NAD(P)-binding domain"/>
    <property type="match status" value="2"/>
</dbReference>
<dbReference type="Gene3D" id="2.102.10.10">
    <property type="entry name" value="Rieske [2Fe-2S] iron-sulphur domain"/>
    <property type="match status" value="1"/>
</dbReference>
<dbReference type="Gene3D" id="3.30.413.10">
    <property type="entry name" value="Sulfite Reductase Hemoprotein, domain 1"/>
    <property type="match status" value="1"/>
</dbReference>
<dbReference type="InterPro" id="IPR007419">
    <property type="entry name" value="BFD-like_2Fe2S-bd_dom"/>
</dbReference>
<dbReference type="InterPro" id="IPR041854">
    <property type="entry name" value="BFD-like_2Fe2S-bd_dom_sf"/>
</dbReference>
<dbReference type="InterPro" id="IPR036188">
    <property type="entry name" value="FAD/NAD-bd_sf"/>
</dbReference>
<dbReference type="InterPro" id="IPR023753">
    <property type="entry name" value="FAD/NAD-binding_dom"/>
</dbReference>
<dbReference type="InterPro" id="IPR052034">
    <property type="entry name" value="NasD-like"/>
</dbReference>
<dbReference type="InterPro" id="IPR005117">
    <property type="entry name" value="NiRdtase/SiRdtase_haem-b_fer"/>
</dbReference>
<dbReference type="InterPro" id="IPR036136">
    <property type="entry name" value="Nit/Sulf_reduc_fer-like_dom_sf"/>
</dbReference>
<dbReference type="InterPro" id="IPR006067">
    <property type="entry name" value="NO2/SO3_Rdtase_4Fe4S_dom"/>
</dbReference>
<dbReference type="InterPro" id="IPR045854">
    <property type="entry name" value="NO2/SO3_Rdtase_4Fe4S_sf"/>
</dbReference>
<dbReference type="InterPro" id="IPR006066">
    <property type="entry name" value="NO2/SO3_Rdtase_FeS/sirohaem_BS"/>
</dbReference>
<dbReference type="InterPro" id="IPR012748">
    <property type="entry name" value="Rieske-like_NirD"/>
</dbReference>
<dbReference type="InterPro" id="IPR017941">
    <property type="entry name" value="Rieske_2Fe-2S"/>
</dbReference>
<dbReference type="InterPro" id="IPR036922">
    <property type="entry name" value="Rieske_2Fe-2S_sf"/>
</dbReference>
<dbReference type="NCBIfam" id="TIGR02378">
    <property type="entry name" value="nirD_assim_sml"/>
    <property type="match status" value="1"/>
</dbReference>
<dbReference type="PANTHER" id="PTHR43809">
    <property type="entry name" value="NITRITE REDUCTASE (NADH) LARGE SUBUNIT"/>
    <property type="match status" value="1"/>
</dbReference>
<dbReference type="PANTHER" id="PTHR43809:SF1">
    <property type="entry name" value="NITRITE REDUCTASE (NADH) LARGE SUBUNIT"/>
    <property type="match status" value="1"/>
</dbReference>
<dbReference type="Pfam" id="PF04324">
    <property type="entry name" value="Fer2_BFD"/>
    <property type="match status" value="1"/>
</dbReference>
<dbReference type="Pfam" id="PF01077">
    <property type="entry name" value="NIR_SIR"/>
    <property type="match status" value="1"/>
</dbReference>
<dbReference type="Pfam" id="PF03460">
    <property type="entry name" value="NIR_SIR_ferr"/>
    <property type="match status" value="1"/>
</dbReference>
<dbReference type="Pfam" id="PF07992">
    <property type="entry name" value="Pyr_redox_2"/>
    <property type="match status" value="1"/>
</dbReference>
<dbReference type="Pfam" id="PF00355">
    <property type="entry name" value="Rieske"/>
    <property type="match status" value="1"/>
</dbReference>
<dbReference type="PRINTS" id="PR00368">
    <property type="entry name" value="FADPNR"/>
</dbReference>
<dbReference type="PRINTS" id="PR00397">
    <property type="entry name" value="SIROHAEM"/>
</dbReference>
<dbReference type="SUPFAM" id="SSF51905">
    <property type="entry name" value="FAD/NAD(P)-binding domain"/>
    <property type="match status" value="2"/>
</dbReference>
<dbReference type="SUPFAM" id="SSF50022">
    <property type="entry name" value="ISP domain"/>
    <property type="match status" value="1"/>
</dbReference>
<dbReference type="SUPFAM" id="SSF56014">
    <property type="entry name" value="Nitrite and sulphite reductase 4Fe-4S domain-like"/>
    <property type="match status" value="1"/>
</dbReference>
<dbReference type="SUPFAM" id="SSF55124">
    <property type="entry name" value="Nitrite/Sulfite reductase N-terminal domain-like"/>
    <property type="match status" value="1"/>
</dbReference>
<dbReference type="PROSITE" id="PS00365">
    <property type="entry name" value="NIR_SIR"/>
    <property type="match status" value="1"/>
</dbReference>
<dbReference type="PROSITE" id="PS51296">
    <property type="entry name" value="RIESKE"/>
    <property type="match status" value="1"/>
</dbReference>
<name>NIR_EMENI</name>
<gene>
    <name type="primary">niiA</name>
    <name type="ORF">AN1007</name>
</gene>
<feature type="chain" id="PRO_0000199958" description="Nitrite reductase [NAD(P)H]">
    <location>
        <begin position="1"/>
        <end position="1104"/>
    </location>
</feature>
<feature type="domain" description="Rieske" evidence="4">
    <location>
        <begin position="932"/>
        <end position="1040"/>
    </location>
</feature>
<feature type="region of interest" description="Disordered" evidence="5">
    <location>
        <begin position="396"/>
        <end position="419"/>
    </location>
</feature>
<feature type="region of interest" description="Disordered" evidence="5">
    <location>
        <begin position="1081"/>
        <end position="1104"/>
    </location>
</feature>
<feature type="compositionally biased region" description="Polar residues" evidence="5">
    <location>
        <begin position="1094"/>
        <end position="1104"/>
    </location>
</feature>
<feature type="binding site" evidence="3">
    <location>
        <begin position="44"/>
        <end position="79"/>
    </location>
    <ligand>
        <name>FAD</name>
        <dbReference type="ChEBI" id="CHEBI:57692"/>
    </ligand>
</feature>
<feature type="binding site" evidence="3">
    <location>
        <begin position="146"/>
        <end position="176"/>
    </location>
    <ligand>
        <name>NAD(+)</name>
        <dbReference type="ChEBI" id="CHEBI:57540"/>
    </ligand>
</feature>
<feature type="binding site" evidence="2">
    <location>
        <position position="500"/>
    </location>
    <ligand>
        <name>[2Fe-2S] cluster</name>
        <dbReference type="ChEBI" id="CHEBI:190135"/>
        <label>1</label>
    </ligand>
</feature>
<feature type="binding site" evidence="2">
    <location>
        <position position="502"/>
    </location>
    <ligand>
        <name>[2Fe-2S] cluster</name>
        <dbReference type="ChEBI" id="CHEBI:190135"/>
        <label>1</label>
    </ligand>
</feature>
<feature type="binding site" evidence="2">
    <location>
        <position position="535"/>
    </location>
    <ligand>
        <name>[2Fe-2S] cluster</name>
        <dbReference type="ChEBI" id="CHEBI:190135"/>
        <label>1</label>
    </ligand>
</feature>
<feature type="binding site" evidence="2">
    <location>
        <position position="538"/>
    </location>
    <ligand>
        <name>[2Fe-2S] cluster</name>
        <dbReference type="ChEBI" id="CHEBI:190135"/>
        <label>1</label>
    </ligand>
</feature>
<feature type="binding site" evidence="1">
    <location>
        <position position="720"/>
    </location>
    <ligand>
        <name>[4Fe-4S] cluster</name>
        <dbReference type="ChEBI" id="CHEBI:49883"/>
    </ligand>
</feature>
<feature type="binding site" evidence="1">
    <location>
        <position position="726"/>
    </location>
    <ligand>
        <name>[4Fe-4S] cluster</name>
        <dbReference type="ChEBI" id="CHEBI:49883"/>
    </ligand>
</feature>
<feature type="binding site" evidence="1">
    <location>
        <position position="760"/>
    </location>
    <ligand>
        <name>[4Fe-4S] cluster</name>
        <dbReference type="ChEBI" id="CHEBI:49883"/>
    </ligand>
</feature>
<feature type="binding site" evidence="1">
    <location>
        <position position="764"/>
    </location>
    <ligand>
        <name>[4Fe-4S] cluster</name>
        <dbReference type="ChEBI" id="CHEBI:49883"/>
    </ligand>
</feature>
<feature type="binding site" description="axial binding residue" evidence="1">
    <location>
        <position position="764"/>
    </location>
    <ligand>
        <name>siroheme</name>
        <dbReference type="ChEBI" id="CHEBI:60052"/>
    </ligand>
    <ligandPart>
        <name>Fe</name>
        <dbReference type="ChEBI" id="CHEBI:18248"/>
    </ligandPart>
</feature>
<feature type="binding site" evidence="4">
    <location>
        <position position="976"/>
    </location>
    <ligand>
        <name>[2Fe-2S] cluster</name>
        <dbReference type="ChEBI" id="CHEBI:190135"/>
        <label>2</label>
    </ligand>
</feature>
<feature type="binding site" evidence="4">
    <location>
        <position position="978"/>
    </location>
    <ligand>
        <name>[2Fe-2S] cluster</name>
        <dbReference type="ChEBI" id="CHEBI:190135"/>
        <label>2</label>
    </ligand>
</feature>
<feature type="binding site" evidence="4">
    <location>
        <position position="1001"/>
    </location>
    <ligand>
        <name>[2Fe-2S] cluster</name>
        <dbReference type="ChEBI" id="CHEBI:190135"/>
        <label>2</label>
    </ligand>
</feature>
<feature type="binding site" evidence="4">
    <location>
        <position position="1004"/>
    </location>
    <ligand>
        <name>[2Fe-2S] cluster</name>
        <dbReference type="ChEBI" id="CHEBI:190135"/>
        <label>2</label>
    </ligand>
</feature>
<feature type="sequence conflict" description="In Ref. 1; AAA33315." evidence="6" ref="1">
    <original>A</original>
    <variation>R</variation>
    <location>
        <position position="709"/>
    </location>
</feature>
<proteinExistence type="inferred from homology"/>
<reference key="1">
    <citation type="journal article" date="1990" name="Gene">
        <title>Isolation and characterisation of the crnA-niiA-niaD gene cluster for nitrate assimilation in Aspergillus nidulans.</title>
        <authorList>
            <person name="Johnstone I.L."/>
            <person name="McCabe P.C."/>
            <person name="Greaves P."/>
            <person name="Gurr S.J."/>
            <person name="Cole G.E."/>
            <person name="Brow M.A.D."/>
            <person name="Unkles S.E."/>
            <person name="Clutterbuck A.J."/>
            <person name="Kinghorn J.R."/>
            <person name="Innis M.A."/>
        </authorList>
    </citation>
    <scope>NUCLEOTIDE SEQUENCE [GENOMIC DNA]</scope>
</reference>
<reference key="2">
    <citation type="journal article" date="2005" name="Nature">
        <title>Sequencing of Aspergillus nidulans and comparative analysis with A. fumigatus and A. oryzae.</title>
        <authorList>
            <person name="Galagan J.E."/>
            <person name="Calvo S.E."/>
            <person name="Cuomo C."/>
            <person name="Ma L.-J."/>
            <person name="Wortman J.R."/>
            <person name="Batzoglou S."/>
            <person name="Lee S.-I."/>
            <person name="Bastuerkmen M."/>
            <person name="Spevak C.C."/>
            <person name="Clutterbuck J."/>
            <person name="Kapitonov V."/>
            <person name="Jurka J."/>
            <person name="Scazzocchio C."/>
            <person name="Farman M.L."/>
            <person name="Butler J."/>
            <person name="Purcell S."/>
            <person name="Harris S."/>
            <person name="Braus G.H."/>
            <person name="Draht O."/>
            <person name="Busch S."/>
            <person name="D'Enfert C."/>
            <person name="Bouchier C."/>
            <person name="Goldman G.H."/>
            <person name="Bell-Pedersen D."/>
            <person name="Griffiths-Jones S."/>
            <person name="Doonan J.H."/>
            <person name="Yu J."/>
            <person name="Vienken K."/>
            <person name="Pain A."/>
            <person name="Freitag M."/>
            <person name="Selker E.U."/>
            <person name="Archer D.B."/>
            <person name="Penalva M.A."/>
            <person name="Oakley B.R."/>
            <person name="Momany M."/>
            <person name="Tanaka T."/>
            <person name="Kumagai T."/>
            <person name="Asai K."/>
            <person name="Machida M."/>
            <person name="Nierman W.C."/>
            <person name="Denning D.W."/>
            <person name="Caddick M.X."/>
            <person name="Hynes M."/>
            <person name="Paoletti M."/>
            <person name="Fischer R."/>
            <person name="Miller B.L."/>
            <person name="Dyer P.S."/>
            <person name="Sachs M.S."/>
            <person name="Osmani S.A."/>
            <person name="Birren B.W."/>
        </authorList>
    </citation>
    <scope>NUCLEOTIDE SEQUENCE [LARGE SCALE GENOMIC DNA]</scope>
    <source>
        <strain>FGSC A4 / ATCC 38163 / CBS 112.46 / NRRL 194 / M139</strain>
    </source>
</reference>
<reference key="3">
    <citation type="journal article" date="2009" name="Fungal Genet. Biol.">
        <title>The 2008 update of the Aspergillus nidulans genome annotation: a community effort.</title>
        <authorList>
            <person name="Wortman J.R."/>
            <person name="Gilsenan J.M."/>
            <person name="Joardar V."/>
            <person name="Deegan J."/>
            <person name="Clutterbuck J."/>
            <person name="Andersen M.R."/>
            <person name="Archer D."/>
            <person name="Bencina M."/>
            <person name="Braus G."/>
            <person name="Coutinho P."/>
            <person name="von Dohren H."/>
            <person name="Doonan J."/>
            <person name="Driessen A.J."/>
            <person name="Durek P."/>
            <person name="Espeso E."/>
            <person name="Fekete E."/>
            <person name="Flipphi M."/>
            <person name="Estrada C.G."/>
            <person name="Geysens S."/>
            <person name="Goldman G."/>
            <person name="de Groot P.W."/>
            <person name="Hansen K."/>
            <person name="Harris S.D."/>
            <person name="Heinekamp T."/>
            <person name="Helmstaedt K."/>
            <person name="Henrissat B."/>
            <person name="Hofmann G."/>
            <person name="Homan T."/>
            <person name="Horio T."/>
            <person name="Horiuchi H."/>
            <person name="James S."/>
            <person name="Jones M."/>
            <person name="Karaffa L."/>
            <person name="Karanyi Z."/>
            <person name="Kato M."/>
            <person name="Keller N."/>
            <person name="Kelly D.E."/>
            <person name="Kiel J.A."/>
            <person name="Kim J.M."/>
            <person name="van der Klei I.J."/>
            <person name="Klis F.M."/>
            <person name="Kovalchuk A."/>
            <person name="Krasevec N."/>
            <person name="Kubicek C.P."/>
            <person name="Liu B."/>
            <person name="Maccabe A."/>
            <person name="Meyer V."/>
            <person name="Mirabito P."/>
            <person name="Miskei M."/>
            <person name="Mos M."/>
            <person name="Mullins J."/>
            <person name="Nelson D.R."/>
            <person name="Nielsen J."/>
            <person name="Oakley B.R."/>
            <person name="Osmani S.A."/>
            <person name="Pakula T."/>
            <person name="Paszewski A."/>
            <person name="Paulsen I."/>
            <person name="Pilsyk S."/>
            <person name="Pocsi I."/>
            <person name="Punt P.J."/>
            <person name="Ram A.F."/>
            <person name="Ren Q."/>
            <person name="Robellet X."/>
            <person name="Robson G."/>
            <person name="Seiboth B."/>
            <person name="van Solingen P."/>
            <person name="Specht T."/>
            <person name="Sun J."/>
            <person name="Taheri-Talesh N."/>
            <person name="Takeshita N."/>
            <person name="Ussery D."/>
            <person name="vanKuyk P.A."/>
            <person name="Visser H."/>
            <person name="van de Vondervoort P.J."/>
            <person name="de Vries R.P."/>
            <person name="Walton J."/>
            <person name="Xiang X."/>
            <person name="Xiong Y."/>
            <person name="Zeng A.P."/>
            <person name="Brandt B.W."/>
            <person name="Cornell M.J."/>
            <person name="van den Hondel C.A."/>
            <person name="Visser J."/>
            <person name="Oliver S.G."/>
            <person name="Turner G."/>
        </authorList>
    </citation>
    <scope>GENOME REANNOTATION</scope>
    <source>
        <strain>FGSC A4 / ATCC 38163 / CBS 112.46 / NRRL 194 / M139</strain>
    </source>
</reference>